<organism>
    <name type="scientific">Helicobacter acinonychis (strain Sheeba)</name>
    <dbReference type="NCBI Taxonomy" id="382638"/>
    <lineage>
        <taxon>Bacteria</taxon>
        <taxon>Pseudomonadati</taxon>
        <taxon>Campylobacterota</taxon>
        <taxon>Epsilonproteobacteria</taxon>
        <taxon>Campylobacterales</taxon>
        <taxon>Helicobacteraceae</taxon>
        <taxon>Helicobacter</taxon>
    </lineage>
</organism>
<sequence length="438" mass="49548">MQKENKQLCLISLGCSKNLVDSEVMLGKLYNYTLTNDAKSADVILINTCGFIESAKQESIQTILNAAKDKKEGTLLIASGCLSERYKDEIKELIPEVDIFTGVGDYDKIDILIAKKQNQFSEQVFLSEHYNARVITGSSVHAYVKISEGCNQKCSFCAIPSFKGKLHSRELDSILKEVEDLVLKGYKDMTFIAQDSSSFLYDKGQKDGLIQLISAIDKQQALRSARILYLYPSSTTLELIGAIENSPIFQNYFDMPIQHISDSMLKKMRRNSSQAHHLKLLNAMKQVQESFIRSTIIVGHPEENEGEFEELSAFLDEFQFDRLNIFAFSAEENTHAYSLEKVPKKIINARIKALNKIALKHQHNSFKALLNKPIKALVENKEGEYFYKARDLRWAPEVDGEILINDSELNTPLKPGHYTIVPSAFKDNILLAKVLSPF</sequence>
<name>RIMO_HELAH</name>
<accession>Q17XY7</accession>
<gene>
    <name evidence="1" type="primary">rimO</name>
    <name type="ordered locus">Hac_0685</name>
</gene>
<keyword id="KW-0004">4Fe-4S</keyword>
<keyword id="KW-0963">Cytoplasm</keyword>
<keyword id="KW-0408">Iron</keyword>
<keyword id="KW-0411">Iron-sulfur</keyword>
<keyword id="KW-0479">Metal-binding</keyword>
<keyword id="KW-0949">S-adenosyl-L-methionine</keyword>
<keyword id="KW-0808">Transferase</keyword>
<feature type="chain" id="PRO_0000374854" description="Ribosomal protein uS12 methylthiotransferase RimO">
    <location>
        <begin position="1"/>
        <end position="438"/>
    </location>
</feature>
<feature type="domain" description="MTTase N-terminal" evidence="1">
    <location>
        <begin position="6"/>
        <end position="118"/>
    </location>
</feature>
<feature type="domain" description="Radical SAM core" evidence="2">
    <location>
        <begin position="136"/>
        <end position="364"/>
    </location>
</feature>
<feature type="binding site" evidence="1">
    <location>
        <position position="15"/>
    </location>
    <ligand>
        <name>[4Fe-4S] cluster</name>
        <dbReference type="ChEBI" id="CHEBI:49883"/>
        <label>1</label>
    </ligand>
</feature>
<feature type="binding site" evidence="1">
    <location>
        <position position="49"/>
    </location>
    <ligand>
        <name>[4Fe-4S] cluster</name>
        <dbReference type="ChEBI" id="CHEBI:49883"/>
        <label>1</label>
    </ligand>
</feature>
<feature type="binding site" evidence="1">
    <location>
        <position position="81"/>
    </location>
    <ligand>
        <name>[4Fe-4S] cluster</name>
        <dbReference type="ChEBI" id="CHEBI:49883"/>
        <label>1</label>
    </ligand>
</feature>
<feature type="binding site" evidence="1">
    <location>
        <position position="150"/>
    </location>
    <ligand>
        <name>[4Fe-4S] cluster</name>
        <dbReference type="ChEBI" id="CHEBI:49883"/>
        <label>2</label>
        <note>4Fe-4S-S-AdoMet</note>
    </ligand>
</feature>
<feature type="binding site" evidence="1">
    <location>
        <position position="154"/>
    </location>
    <ligand>
        <name>[4Fe-4S] cluster</name>
        <dbReference type="ChEBI" id="CHEBI:49883"/>
        <label>2</label>
        <note>4Fe-4S-S-AdoMet</note>
    </ligand>
</feature>
<feature type="binding site" evidence="1">
    <location>
        <position position="157"/>
    </location>
    <ligand>
        <name>[4Fe-4S] cluster</name>
        <dbReference type="ChEBI" id="CHEBI:49883"/>
        <label>2</label>
        <note>4Fe-4S-S-AdoMet</note>
    </ligand>
</feature>
<protein>
    <recommendedName>
        <fullName evidence="1">Ribosomal protein uS12 methylthiotransferase RimO</fullName>
        <shortName evidence="1">uS12 MTTase</shortName>
        <shortName evidence="1">uS12 methylthiotransferase</shortName>
        <ecNumber evidence="1">2.8.4.4</ecNumber>
    </recommendedName>
    <alternativeName>
        <fullName evidence="1">Ribosomal protein uS12 (aspartate-C(3))-methylthiotransferase</fullName>
    </alternativeName>
    <alternativeName>
        <fullName evidence="1">Ribosome maturation factor RimO</fullName>
    </alternativeName>
</protein>
<dbReference type="EC" id="2.8.4.4" evidence="1"/>
<dbReference type="EMBL" id="AM260522">
    <property type="protein sequence ID" value="CAJ99489.1"/>
    <property type="molecule type" value="Genomic_DNA"/>
</dbReference>
<dbReference type="RefSeq" id="WP_011577602.1">
    <property type="nucleotide sequence ID" value="NC_008229.1"/>
</dbReference>
<dbReference type="SMR" id="Q17XY7"/>
<dbReference type="STRING" id="382638.Hac_0685"/>
<dbReference type="GeneID" id="31758140"/>
<dbReference type="KEGG" id="hac:Hac_0685"/>
<dbReference type="eggNOG" id="COG0621">
    <property type="taxonomic scope" value="Bacteria"/>
</dbReference>
<dbReference type="HOGENOM" id="CLU_018697_0_1_7"/>
<dbReference type="OrthoDB" id="9805215at2"/>
<dbReference type="BioCyc" id="HACI382638:HAC_RS03005-MONOMER"/>
<dbReference type="Proteomes" id="UP000000775">
    <property type="component" value="Chromosome"/>
</dbReference>
<dbReference type="GO" id="GO:0005829">
    <property type="term" value="C:cytosol"/>
    <property type="evidence" value="ECO:0007669"/>
    <property type="project" value="TreeGrafter"/>
</dbReference>
<dbReference type="GO" id="GO:0051539">
    <property type="term" value="F:4 iron, 4 sulfur cluster binding"/>
    <property type="evidence" value="ECO:0007669"/>
    <property type="project" value="UniProtKB-UniRule"/>
</dbReference>
<dbReference type="GO" id="GO:0035599">
    <property type="term" value="F:aspartic acid methylthiotransferase activity"/>
    <property type="evidence" value="ECO:0007669"/>
    <property type="project" value="TreeGrafter"/>
</dbReference>
<dbReference type="GO" id="GO:0046872">
    <property type="term" value="F:metal ion binding"/>
    <property type="evidence" value="ECO:0007669"/>
    <property type="project" value="UniProtKB-KW"/>
</dbReference>
<dbReference type="GO" id="GO:0103039">
    <property type="term" value="F:protein methylthiotransferase activity"/>
    <property type="evidence" value="ECO:0007669"/>
    <property type="project" value="UniProtKB-EC"/>
</dbReference>
<dbReference type="GO" id="GO:0006400">
    <property type="term" value="P:tRNA modification"/>
    <property type="evidence" value="ECO:0007669"/>
    <property type="project" value="InterPro"/>
</dbReference>
<dbReference type="CDD" id="cd01335">
    <property type="entry name" value="Radical_SAM"/>
    <property type="match status" value="1"/>
</dbReference>
<dbReference type="FunFam" id="3.40.50.12160:FF:000010">
    <property type="entry name" value="Ribosomal protein S12 methylthiotransferase RimO"/>
    <property type="match status" value="1"/>
</dbReference>
<dbReference type="Gene3D" id="3.40.50.12160">
    <property type="entry name" value="Methylthiotransferase, N-terminal domain"/>
    <property type="match status" value="1"/>
</dbReference>
<dbReference type="Gene3D" id="3.80.30.20">
    <property type="entry name" value="tm_1862 like domain"/>
    <property type="match status" value="1"/>
</dbReference>
<dbReference type="HAMAP" id="MF_01865">
    <property type="entry name" value="MTTase_RimO"/>
    <property type="match status" value="1"/>
</dbReference>
<dbReference type="InterPro" id="IPR006638">
    <property type="entry name" value="Elp3/MiaA/NifB-like_rSAM"/>
</dbReference>
<dbReference type="InterPro" id="IPR005839">
    <property type="entry name" value="Methylthiotransferase"/>
</dbReference>
<dbReference type="InterPro" id="IPR020612">
    <property type="entry name" value="Methylthiotransferase_CS"/>
</dbReference>
<dbReference type="InterPro" id="IPR013848">
    <property type="entry name" value="Methylthiotransferase_N"/>
</dbReference>
<dbReference type="InterPro" id="IPR038135">
    <property type="entry name" value="Methylthiotransferase_N_sf"/>
</dbReference>
<dbReference type="InterPro" id="IPR005840">
    <property type="entry name" value="Ribosomal_uS12_MeSTrfase_RimO"/>
</dbReference>
<dbReference type="InterPro" id="IPR007197">
    <property type="entry name" value="rSAM"/>
</dbReference>
<dbReference type="InterPro" id="IPR023404">
    <property type="entry name" value="rSAM_horseshoe"/>
</dbReference>
<dbReference type="NCBIfam" id="TIGR01125">
    <property type="entry name" value="30S ribosomal protein S12 methylthiotransferase RimO"/>
    <property type="match status" value="1"/>
</dbReference>
<dbReference type="NCBIfam" id="TIGR00089">
    <property type="entry name" value="MiaB/RimO family radical SAM methylthiotransferase"/>
    <property type="match status" value="1"/>
</dbReference>
<dbReference type="PANTHER" id="PTHR43837">
    <property type="entry name" value="RIBOSOMAL PROTEIN S12 METHYLTHIOTRANSFERASE RIMO"/>
    <property type="match status" value="1"/>
</dbReference>
<dbReference type="PANTHER" id="PTHR43837:SF1">
    <property type="entry name" value="RIBOSOMAL PROTEIN US12 METHYLTHIOTRANSFERASE RIMO"/>
    <property type="match status" value="1"/>
</dbReference>
<dbReference type="Pfam" id="PF04055">
    <property type="entry name" value="Radical_SAM"/>
    <property type="match status" value="1"/>
</dbReference>
<dbReference type="Pfam" id="PF00919">
    <property type="entry name" value="UPF0004"/>
    <property type="match status" value="1"/>
</dbReference>
<dbReference type="SFLD" id="SFLDG01082">
    <property type="entry name" value="B12-binding_domain_containing"/>
    <property type="match status" value="1"/>
</dbReference>
<dbReference type="SFLD" id="SFLDG01061">
    <property type="entry name" value="methylthiotransferase"/>
    <property type="match status" value="1"/>
</dbReference>
<dbReference type="SFLD" id="SFLDF00274">
    <property type="entry name" value="ribosomal_protein_S12_methylth"/>
    <property type="match status" value="1"/>
</dbReference>
<dbReference type="SMART" id="SM00729">
    <property type="entry name" value="Elp3"/>
    <property type="match status" value="1"/>
</dbReference>
<dbReference type="SUPFAM" id="SSF102114">
    <property type="entry name" value="Radical SAM enzymes"/>
    <property type="match status" value="1"/>
</dbReference>
<dbReference type="PROSITE" id="PS51449">
    <property type="entry name" value="MTTASE_N"/>
    <property type="match status" value="1"/>
</dbReference>
<dbReference type="PROSITE" id="PS01278">
    <property type="entry name" value="MTTASE_RADICAL"/>
    <property type="match status" value="1"/>
</dbReference>
<dbReference type="PROSITE" id="PS51918">
    <property type="entry name" value="RADICAL_SAM"/>
    <property type="match status" value="1"/>
</dbReference>
<comment type="function">
    <text evidence="1">Catalyzes the methylthiolation of an aspartic acid residue of ribosomal protein uS12.</text>
</comment>
<comment type="catalytic activity">
    <reaction evidence="1">
        <text>L-aspartate(89)-[ribosomal protein uS12]-hydrogen + (sulfur carrier)-SH + AH2 + 2 S-adenosyl-L-methionine = 3-methylsulfanyl-L-aspartate(89)-[ribosomal protein uS12]-hydrogen + (sulfur carrier)-H + 5'-deoxyadenosine + L-methionine + A + S-adenosyl-L-homocysteine + 2 H(+)</text>
        <dbReference type="Rhea" id="RHEA:37087"/>
        <dbReference type="Rhea" id="RHEA-COMP:10460"/>
        <dbReference type="Rhea" id="RHEA-COMP:10461"/>
        <dbReference type="Rhea" id="RHEA-COMP:14737"/>
        <dbReference type="Rhea" id="RHEA-COMP:14739"/>
        <dbReference type="ChEBI" id="CHEBI:13193"/>
        <dbReference type="ChEBI" id="CHEBI:15378"/>
        <dbReference type="ChEBI" id="CHEBI:17319"/>
        <dbReference type="ChEBI" id="CHEBI:17499"/>
        <dbReference type="ChEBI" id="CHEBI:29917"/>
        <dbReference type="ChEBI" id="CHEBI:29961"/>
        <dbReference type="ChEBI" id="CHEBI:57844"/>
        <dbReference type="ChEBI" id="CHEBI:57856"/>
        <dbReference type="ChEBI" id="CHEBI:59789"/>
        <dbReference type="ChEBI" id="CHEBI:64428"/>
        <dbReference type="ChEBI" id="CHEBI:73599"/>
        <dbReference type="EC" id="2.8.4.4"/>
    </reaction>
</comment>
<comment type="cofactor">
    <cofactor evidence="1">
        <name>[4Fe-4S] cluster</name>
        <dbReference type="ChEBI" id="CHEBI:49883"/>
    </cofactor>
    <text evidence="1">Binds 2 [4Fe-4S] clusters. One cluster is coordinated with 3 cysteines and an exchangeable S-adenosyl-L-methionine.</text>
</comment>
<comment type="subcellular location">
    <subcellularLocation>
        <location evidence="1">Cytoplasm</location>
    </subcellularLocation>
</comment>
<comment type="similarity">
    <text evidence="1">Belongs to the methylthiotransferase family. RimO subfamily.</text>
</comment>
<proteinExistence type="inferred from homology"/>
<reference key="1">
    <citation type="journal article" date="2006" name="PLoS Genet.">
        <title>Who ate whom? Adaptive Helicobacter genomic changes that accompanied a host jump from early humans to large felines.</title>
        <authorList>
            <person name="Eppinger M."/>
            <person name="Baar C."/>
            <person name="Linz B."/>
            <person name="Raddatz G."/>
            <person name="Lanz C."/>
            <person name="Keller H."/>
            <person name="Morelli G."/>
            <person name="Gressmann H."/>
            <person name="Achtman M."/>
            <person name="Schuster S.C."/>
        </authorList>
    </citation>
    <scope>NUCLEOTIDE SEQUENCE [LARGE SCALE GENOMIC DNA]</scope>
    <source>
        <strain>Sheeba</strain>
    </source>
</reference>
<evidence type="ECO:0000255" key="1">
    <source>
        <dbReference type="HAMAP-Rule" id="MF_01865"/>
    </source>
</evidence>
<evidence type="ECO:0000255" key="2">
    <source>
        <dbReference type="PROSITE-ProRule" id="PRU01266"/>
    </source>
</evidence>